<accession>Q7MK61</accession>
<evidence type="ECO:0000255" key="1">
    <source>
        <dbReference type="HAMAP-Rule" id="MF_00372"/>
    </source>
</evidence>
<name>HUTI_VIBVY</name>
<sequence>MDLLLTNARLVTLQSGEMGYQPSTPMSIGIKAGKIHYLGIDTALAATKQIDLKGKLVTPGLIDCHTHLVYAGNRSNEFEMRLQGVPYQEIARQGGGILSTVYGTRQASEAQLLEQTLPRLDGLLASGVTSVEIKSGYGLTLVDEIKMLRVAKSLSQHRLVKVTPTLLAAHALPPEFTGRANDYIEFICQEIIPVVAEEQLATSVDVFCESIGFDLAQTERVYACAVDHGLRVKGHTEQLSNLGGTALTARYQGLSADHIEFLDRAGVEALARSSTVATLLPGAFYFLRETQLPPIELLRQFGVPMAIASDVNPGTSPFCDLTLMMNMACTLFRLTPEEALRGVTQHAAQALGYAESRGQIKTGYDADLAIWQIEHPADLSYQVGTQRLFARVVDGQFEQHKECCDE</sequence>
<dbReference type="EC" id="3.5.2.7" evidence="1"/>
<dbReference type="EMBL" id="BA000037">
    <property type="protein sequence ID" value="BAC94713.1"/>
    <property type="molecule type" value="Genomic_DNA"/>
</dbReference>
<dbReference type="RefSeq" id="WP_011150504.1">
    <property type="nucleotide sequence ID" value="NC_005139.1"/>
</dbReference>
<dbReference type="SMR" id="Q7MK61"/>
<dbReference type="STRING" id="672.VV93_v1c17090"/>
<dbReference type="KEGG" id="vvy:VV1949"/>
<dbReference type="PATRIC" id="fig|196600.6.peg.1977"/>
<dbReference type="eggNOG" id="COG1228">
    <property type="taxonomic scope" value="Bacteria"/>
</dbReference>
<dbReference type="HOGENOM" id="CLU_041647_0_1_6"/>
<dbReference type="UniPathway" id="UPA00379">
    <property type="reaction ID" value="UER00551"/>
</dbReference>
<dbReference type="Proteomes" id="UP000002675">
    <property type="component" value="Chromosome I"/>
</dbReference>
<dbReference type="GO" id="GO:0005737">
    <property type="term" value="C:cytoplasm"/>
    <property type="evidence" value="ECO:0007669"/>
    <property type="project" value="UniProtKB-SubCell"/>
</dbReference>
<dbReference type="GO" id="GO:0050480">
    <property type="term" value="F:imidazolonepropionase activity"/>
    <property type="evidence" value="ECO:0007669"/>
    <property type="project" value="UniProtKB-UniRule"/>
</dbReference>
<dbReference type="GO" id="GO:0005506">
    <property type="term" value="F:iron ion binding"/>
    <property type="evidence" value="ECO:0007669"/>
    <property type="project" value="UniProtKB-UniRule"/>
</dbReference>
<dbReference type="GO" id="GO:0008270">
    <property type="term" value="F:zinc ion binding"/>
    <property type="evidence" value="ECO:0007669"/>
    <property type="project" value="UniProtKB-UniRule"/>
</dbReference>
<dbReference type="GO" id="GO:0019556">
    <property type="term" value="P:L-histidine catabolic process to glutamate and formamide"/>
    <property type="evidence" value="ECO:0007669"/>
    <property type="project" value="UniProtKB-UniPathway"/>
</dbReference>
<dbReference type="GO" id="GO:0019557">
    <property type="term" value="P:L-histidine catabolic process to glutamate and formate"/>
    <property type="evidence" value="ECO:0007669"/>
    <property type="project" value="UniProtKB-UniPathway"/>
</dbReference>
<dbReference type="CDD" id="cd01296">
    <property type="entry name" value="Imidazolone-5PH"/>
    <property type="match status" value="1"/>
</dbReference>
<dbReference type="FunFam" id="3.20.20.140:FF:000007">
    <property type="entry name" value="Imidazolonepropionase"/>
    <property type="match status" value="1"/>
</dbReference>
<dbReference type="Gene3D" id="3.20.20.140">
    <property type="entry name" value="Metal-dependent hydrolases"/>
    <property type="match status" value="1"/>
</dbReference>
<dbReference type="Gene3D" id="2.30.40.10">
    <property type="entry name" value="Urease, subunit C, domain 1"/>
    <property type="match status" value="1"/>
</dbReference>
<dbReference type="HAMAP" id="MF_00372">
    <property type="entry name" value="HutI"/>
    <property type="match status" value="1"/>
</dbReference>
<dbReference type="InterPro" id="IPR006680">
    <property type="entry name" value="Amidohydro-rel"/>
</dbReference>
<dbReference type="InterPro" id="IPR005920">
    <property type="entry name" value="HutI"/>
</dbReference>
<dbReference type="InterPro" id="IPR011059">
    <property type="entry name" value="Metal-dep_hydrolase_composite"/>
</dbReference>
<dbReference type="InterPro" id="IPR032466">
    <property type="entry name" value="Metal_Hydrolase"/>
</dbReference>
<dbReference type="NCBIfam" id="TIGR01224">
    <property type="entry name" value="hutI"/>
    <property type="match status" value="1"/>
</dbReference>
<dbReference type="PANTHER" id="PTHR42752">
    <property type="entry name" value="IMIDAZOLONEPROPIONASE"/>
    <property type="match status" value="1"/>
</dbReference>
<dbReference type="PANTHER" id="PTHR42752:SF1">
    <property type="entry name" value="IMIDAZOLONEPROPIONASE-RELATED"/>
    <property type="match status" value="1"/>
</dbReference>
<dbReference type="Pfam" id="PF01979">
    <property type="entry name" value="Amidohydro_1"/>
    <property type="match status" value="1"/>
</dbReference>
<dbReference type="SUPFAM" id="SSF51338">
    <property type="entry name" value="Composite domain of metallo-dependent hydrolases"/>
    <property type="match status" value="1"/>
</dbReference>
<dbReference type="SUPFAM" id="SSF51556">
    <property type="entry name" value="Metallo-dependent hydrolases"/>
    <property type="match status" value="1"/>
</dbReference>
<gene>
    <name evidence="1" type="primary">hutI</name>
    <name type="ordered locus">VV1949</name>
</gene>
<organism>
    <name type="scientific">Vibrio vulnificus (strain YJ016)</name>
    <dbReference type="NCBI Taxonomy" id="196600"/>
    <lineage>
        <taxon>Bacteria</taxon>
        <taxon>Pseudomonadati</taxon>
        <taxon>Pseudomonadota</taxon>
        <taxon>Gammaproteobacteria</taxon>
        <taxon>Vibrionales</taxon>
        <taxon>Vibrionaceae</taxon>
        <taxon>Vibrio</taxon>
    </lineage>
</organism>
<feature type="chain" id="PRO_0000160974" description="Imidazolonepropionase">
    <location>
        <begin position="1"/>
        <end position="406"/>
    </location>
</feature>
<feature type="binding site" evidence="1">
    <location>
        <position position="65"/>
    </location>
    <ligand>
        <name>Fe(3+)</name>
        <dbReference type="ChEBI" id="CHEBI:29034"/>
    </ligand>
</feature>
<feature type="binding site" evidence="1">
    <location>
        <position position="65"/>
    </location>
    <ligand>
        <name>Zn(2+)</name>
        <dbReference type="ChEBI" id="CHEBI:29105"/>
    </ligand>
</feature>
<feature type="binding site" evidence="1">
    <location>
        <position position="67"/>
    </location>
    <ligand>
        <name>Fe(3+)</name>
        <dbReference type="ChEBI" id="CHEBI:29034"/>
    </ligand>
</feature>
<feature type="binding site" evidence="1">
    <location>
        <position position="67"/>
    </location>
    <ligand>
        <name>Zn(2+)</name>
        <dbReference type="ChEBI" id="CHEBI:29105"/>
    </ligand>
</feature>
<feature type="binding site" evidence="1">
    <location>
        <position position="74"/>
    </location>
    <ligand>
        <name>4-imidazolone-5-propanoate</name>
        <dbReference type="ChEBI" id="CHEBI:77893"/>
    </ligand>
</feature>
<feature type="binding site" evidence="1">
    <location>
        <position position="137"/>
    </location>
    <ligand>
        <name>4-imidazolone-5-propanoate</name>
        <dbReference type="ChEBI" id="CHEBI:77893"/>
    </ligand>
</feature>
<feature type="binding site" evidence="1">
    <location>
        <position position="137"/>
    </location>
    <ligand>
        <name>N-formimidoyl-L-glutamate</name>
        <dbReference type="ChEBI" id="CHEBI:58928"/>
    </ligand>
</feature>
<feature type="binding site" evidence="1">
    <location>
        <position position="170"/>
    </location>
    <ligand>
        <name>4-imidazolone-5-propanoate</name>
        <dbReference type="ChEBI" id="CHEBI:77893"/>
    </ligand>
</feature>
<feature type="binding site" evidence="1">
    <location>
        <position position="235"/>
    </location>
    <ligand>
        <name>Fe(3+)</name>
        <dbReference type="ChEBI" id="CHEBI:29034"/>
    </ligand>
</feature>
<feature type="binding site" evidence="1">
    <location>
        <position position="235"/>
    </location>
    <ligand>
        <name>Zn(2+)</name>
        <dbReference type="ChEBI" id="CHEBI:29105"/>
    </ligand>
</feature>
<feature type="binding site" evidence="1">
    <location>
        <position position="238"/>
    </location>
    <ligand>
        <name>4-imidazolone-5-propanoate</name>
        <dbReference type="ChEBI" id="CHEBI:77893"/>
    </ligand>
</feature>
<feature type="binding site" evidence="1">
    <location>
        <position position="310"/>
    </location>
    <ligand>
        <name>Fe(3+)</name>
        <dbReference type="ChEBI" id="CHEBI:29034"/>
    </ligand>
</feature>
<feature type="binding site" evidence="1">
    <location>
        <position position="310"/>
    </location>
    <ligand>
        <name>Zn(2+)</name>
        <dbReference type="ChEBI" id="CHEBI:29105"/>
    </ligand>
</feature>
<feature type="binding site" evidence="1">
    <location>
        <position position="312"/>
    </location>
    <ligand>
        <name>N-formimidoyl-L-glutamate</name>
        <dbReference type="ChEBI" id="CHEBI:58928"/>
    </ligand>
</feature>
<feature type="binding site" evidence="1">
    <location>
        <position position="314"/>
    </location>
    <ligand>
        <name>N-formimidoyl-L-glutamate</name>
        <dbReference type="ChEBI" id="CHEBI:58928"/>
    </ligand>
</feature>
<feature type="binding site" evidence="1">
    <location>
        <position position="315"/>
    </location>
    <ligand>
        <name>4-imidazolone-5-propanoate</name>
        <dbReference type="ChEBI" id="CHEBI:77893"/>
    </ligand>
</feature>
<keyword id="KW-0963">Cytoplasm</keyword>
<keyword id="KW-0369">Histidine metabolism</keyword>
<keyword id="KW-0378">Hydrolase</keyword>
<keyword id="KW-0408">Iron</keyword>
<keyword id="KW-0479">Metal-binding</keyword>
<keyword id="KW-0862">Zinc</keyword>
<comment type="function">
    <text evidence="1">Catalyzes the hydrolytic cleavage of the carbon-nitrogen bond in imidazolone-5-propanoate to yield N-formimidoyl-L-glutamate. It is the third step in the universal histidine degradation pathway.</text>
</comment>
<comment type="catalytic activity">
    <reaction evidence="1">
        <text>4-imidazolone-5-propanoate + H2O = N-formimidoyl-L-glutamate</text>
        <dbReference type="Rhea" id="RHEA:23660"/>
        <dbReference type="ChEBI" id="CHEBI:15377"/>
        <dbReference type="ChEBI" id="CHEBI:58928"/>
        <dbReference type="ChEBI" id="CHEBI:77893"/>
        <dbReference type="EC" id="3.5.2.7"/>
    </reaction>
</comment>
<comment type="cofactor">
    <cofactor evidence="1">
        <name>Zn(2+)</name>
        <dbReference type="ChEBI" id="CHEBI:29105"/>
    </cofactor>
    <cofactor evidence="1">
        <name>Fe(3+)</name>
        <dbReference type="ChEBI" id="CHEBI:29034"/>
    </cofactor>
    <text evidence="1">Binds 1 zinc or iron ion per subunit.</text>
</comment>
<comment type="pathway">
    <text evidence="1">Amino-acid degradation; L-histidine degradation into L-glutamate; N-formimidoyl-L-glutamate from L-histidine: step 3/3.</text>
</comment>
<comment type="subcellular location">
    <subcellularLocation>
        <location evidence="1">Cytoplasm</location>
    </subcellularLocation>
</comment>
<comment type="similarity">
    <text evidence="1">Belongs to the metallo-dependent hydrolases superfamily. HutI family.</text>
</comment>
<protein>
    <recommendedName>
        <fullName evidence="1">Imidazolonepropionase</fullName>
        <ecNumber evidence="1">3.5.2.7</ecNumber>
    </recommendedName>
    <alternativeName>
        <fullName evidence="1">Imidazolone-5-propionate hydrolase</fullName>
    </alternativeName>
</protein>
<proteinExistence type="inferred from homology"/>
<reference key="1">
    <citation type="journal article" date="2003" name="Genome Res.">
        <title>Comparative genome analysis of Vibrio vulnificus, a marine pathogen.</title>
        <authorList>
            <person name="Chen C.-Y."/>
            <person name="Wu K.-M."/>
            <person name="Chang Y.-C."/>
            <person name="Chang C.-H."/>
            <person name="Tsai H.-C."/>
            <person name="Liao T.-L."/>
            <person name="Liu Y.-M."/>
            <person name="Chen H.-J."/>
            <person name="Shen A.B.-T."/>
            <person name="Li J.-C."/>
            <person name="Su T.-L."/>
            <person name="Shao C.-P."/>
            <person name="Lee C.-T."/>
            <person name="Hor L.-I."/>
            <person name="Tsai S.-F."/>
        </authorList>
    </citation>
    <scope>NUCLEOTIDE SEQUENCE [LARGE SCALE GENOMIC DNA]</scope>
    <source>
        <strain>YJ016</strain>
    </source>
</reference>